<name>RL9_VIBPA</name>
<organism>
    <name type="scientific">Vibrio parahaemolyticus serotype O3:K6 (strain RIMD 2210633)</name>
    <dbReference type="NCBI Taxonomy" id="223926"/>
    <lineage>
        <taxon>Bacteria</taxon>
        <taxon>Pseudomonadati</taxon>
        <taxon>Pseudomonadota</taxon>
        <taxon>Gammaproteobacteria</taxon>
        <taxon>Vibrionales</taxon>
        <taxon>Vibrionaceae</taxon>
        <taxon>Vibrio</taxon>
    </lineage>
</organism>
<comment type="function">
    <text evidence="1">Binds to the 23S rRNA.</text>
</comment>
<comment type="similarity">
    <text evidence="1">Belongs to the bacterial ribosomal protein bL9 family.</text>
</comment>
<keyword id="KW-0687">Ribonucleoprotein</keyword>
<keyword id="KW-0689">Ribosomal protein</keyword>
<keyword id="KW-0694">RNA-binding</keyword>
<keyword id="KW-0699">rRNA-binding</keyword>
<sequence length="150" mass="15709">MQVILLDKIGNLGGLGDTVNVKSGYARNFLIPQGKAVMATKGNVEMFEARRAELEAKVAEQLAAAEARAEKVNALEAVVIASKAGDEGKLFGSIGTRDIAEAITAAGVEVAKSEVRLPEGALRTTGEFEISVQLHSEVFATAKVQVVAAE</sequence>
<feature type="chain" id="PRO_0000176702" description="Large ribosomal subunit protein bL9">
    <location>
        <begin position="1"/>
        <end position="150"/>
    </location>
</feature>
<accession>Q87L75</accession>
<gene>
    <name evidence="1" type="primary">rplI</name>
    <name type="ordered locus">VP2737</name>
</gene>
<protein>
    <recommendedName>
        <fullName evidence="1">Large ribosomal subunit protein bL9</fullName>
    </recommendedName>
    <alternativeName>
        <fullName evidence="2">50S ribosomal protein L9</fullName>
    </alternativeName>
</protein>
<proteinExistence type="inferred from homology"/>
<reference key="1">
    <citation type="journal article" date="2003" name="Lancet">
        <title>Genome sequence of Vibrio parahaemolyticus: a pathogenic mechanism distinct from that of V. cholerae.</title>
        <authorList>
            <person name="Makino K."/>
            <person name="Oshima K."/>
            <person name="Kurokawa K."/>
            <person name="Yokoyama K."/>
            <person name="Uda T."/>
            <person name="Tagomori K."/>
            <person name="Iijima Y."/>
            <person name="Najima M."/>
            <person name="Nakano M."/>
            <person name="Yamashita A."/>
            <person name="Kubota Y."/>
            <person name="Kimura S."/>
            <person name="Yasunaga T."/>
            <person name="Honda T."/>
            <person name="Shinagawa H."/>
            <person name="Hattori M."/>
            <person name="Iida T."/>
        </authorList>
    </citation>
    <scope>NUCLEOTIDE SEQUENCE [LARGE SCALE GENOMIC DNA]</scope>
    <source>
        <strain>RIMD 2210633</strain>
    </source>
</reference>
<evidence type="ECO:0000255" key="1">
    <source>
        <dbReference type="HAMAP-Rule" id="MF_00503"/>
    </source>
</evidence>
<evidence type="ECO:0000305" key="2"/>
<dbReference type="EMBL" id="BA000031">
    <property type="protein sequence ID" value="BAC61000.1"/>
    <property type="molecule type" value="Genomic_DNA"/>
</dbReference>
<dbReference type="RefSeq" id="NP_799116.1">
    <property type="nucleotide sequence ID" value="NC_004603.1"/>
</dbReference>
<dbReference type="RefSeq" id="WP_005480442.1">
    <property type="nucleotide sequence ID" value="NC_004603.1"/>
</dbReference>
<dbReference type="SMR" id="Q87L75"/>
<dbReference type="GeneID" id="1190287"/>
<dbReference type="KEGG" id="vpa:VP2737"/>
<dbReference type="PATRIC" id="fig|223926.6.peg.2634"/>
<dbReference type="eggNOG" id="COG0359">
    <property type="taxonomic scope" value="Bacteria"/>
</dbReference>
<dbReference type="HOGENOM" id="CLU_078938_4_1_6"/>
<dbReference type="Proteomes" id="UP000002493">
    <property type="component" value="Chromosome 1"/>
</dbReference>
<dbReference type="GO" id="GO:1990904">
    <property type="term" value="C:ribonucleoprotein complex"/>
    <property type="evidence" value="ECO:0007669"/>
    <property type="project" value="UniProtKB-KW"/>
</dbReference>
<dbReference type="GO" id="GO:0005840">
    <property type="term" value="C:ribosome"/>
    <property type="evidence" value="ECO:0007669"/>
    <property type="project" value="UniProtKB-KW"/>
</dbReference>
<dbReference type="GO" id="GO:0019843">
    <property type="term" value="F:rRNA binding"/>
    <property type="evidence" value="ECO:0007669"/>
    <property type="project" value="UniProtKB-UniRule"/>
</dbReference>
<dbReference type="GO" id="GO:0003735">
    <property type="term" value="F:structural constituent of ribosome"/>
    <property type="evidence" value="ECO:0007669"/>
    <property type="project" value="InterPro"/>
</dbReference>
<dbReference type="GO" id="GO:0006412">
    <property type="term" value="P:translation"/>
    <property type="evidence" value="ECO:0007669"/>
    <property type="project" value="UniProtKB-UniRule"/>
</dbReference>
<dbReference type="FunFam" id="3.10.430.100:FF:000001">
    <property type="entry name" value="50S ribosomal protein L9"/>
    <property type="match status" value="1"/>
</dbReference>
<dbReference type="FunFam" id="3.40.5.10:FF:000001">
    <property type="entry name" value="50S ribosomal protein L9"/>
    <property type="match status" value="1"/>
</dbReference>
<dbReference type="Gene3D" id="3.10.430.100">
    <property type="entry name" value="Ribosomal protein L9, C-terminal domain"/>
    <property type="match status" value="1"/>
</dbReference>
<dbReference type="Gene3D" id="3.40.5.10">
    <property type="entry name" value="Ribosomal protein L9, N-terminal domain"/>
    <property type="match status" value="1"/>
</dbReference>
<dbReference type="HAMAP" id="MF_00503">
    <property type="entry name" value="Ribosomal_bL9"/>
    <property type="match status" value="1"/>
</dbReference>
<dbReference type="InterPro" id="IPR000244">
    <property type="entry name" value="Ribosomal_bL9"/>
</dbReference>
<dbReference type="InterPro" id="IPR009027">
    <property type="entry name" value="Ribosomal_bL9/RNase_H1_N"/>
</dbReference>
<dbReference type="InterPro" id="IPR020594">
    <property type="entry name" value="Ribosomal_bL9_bac/chp"/>
</dbReference>
<dbReference type="InterPro" id="IPR020069">
    <property type="entry name" value="Ribosomal_bL9_C"/>
</dbReference>
<dbReference type="InterPro" id="IPR036791">
    <property type="entry name" value="Ribosomal_bL9_C_sf"/>
</dbReference>
<dbReference type="InterPro" id="IPR020070">
    <property type="entry name" value="Ribosomal_bL9_N"/>
</dbReference>
<dbReference type="InterPro" id="IPR036935">
    <property type="entry name" value="Ribosomal_bL9_N_sf"/>
</dbReference>
<dbReference type="NCBIfam" id="TIGR00158">
    <property type="entry name" value="L9"/>
    <property type="match status" value="1"/>
</dbReference>
<dbReference type="PANTHER" id="PTHR21368">
    <property type="entry name" value="50S RIBOSOMAL PROTEIN L9"/>
    <property type="match status" value="1"/>
</dbReference>
<dbReference type="Pfam" id="PF03948">
    <property type="entry name" value="Ribosomal_L9_C"/>
    <property type="match status" value="1"/>
</dbReference>
<dbReference type="Pfam" id="PF01281">
    <property type="entry name" value="Ribosomal_L9_N"/>
    <property type="match status" value="1"/>
</dbReference>
<dbReference type="SUPFAM" id="SSF55658">
    <property type="entry name" value="L9 N-domain-like"/>
    <property type="match status" value="1"/>
</dbReference>
<dbReference type="SUPFAM" id="SSF55653">
    <property type="entry name" value="Ribosomal protein L9 C-domain"/>
    <property type="match status" value="1"/>
</dbReference>
<dbReference type="PROSITE" id="PS00651">
    <property type="entry name" value="RIBOSOMAL_L9"/>
    <property type="match status" value="1"/>
</dbReference>